<proteinExistence type="inferred from homology"/>
<feature type="chain" id="PRO_0000124692" description="Membrane protein insertase YidC">
    <location>
        <begin position="1"/>
        <end position="563"/>
    </location>
</feature>
<feature type="transmembrane region" description="Helical" evidence="1">
    <location>
        <begin position="6"/>
        <end position="26"/>
    </location>
</feature>
<feature type="transmembrane region" description="Helical" evidence="1">
    <location>
        <begin position="373"/>
        <end position="393"/>
    </location>
</feature>
<feature type="transmembrane region" description="Helical" evidence="1">
    <location>
        <begin position="443"/>
        <end position="463"/>
    </location>
</feature>
<feature type="transmembrane region" description="Helical" evidence="1">
    <location>
        <begin position="482"/>
        <end position="502"/>
    </location>
</feature>
<feature type="transmembrane region" description="Helical" evidence="1">
    <location>
        <begin position="512"/>
        <end position="532"/>
    </location>
</feature>
<feature type="region of interest" description="Disordered" evidence="2">
    <location>
        <begin position="36"/>
        <end position="70"/>
    </location>
</feature>
<feature type="compositionally biased region" description="Low complexity" evidence="2">
    <location>
        <begin position="54"/>
        <end position="70"/>
    </location>
</feature>
<protein>
    <recommendedName>
        <fullName evidence="1">Membrane protein insertase YidC</fullName>
    </recommendedName>
    <alternativeName>
        <fullName evidence="1">Foldase YidC</fullName>
    </alternativeName>
    <alternativeName>
        <fullName evidence="1">Membrane integrase YidC</fullName>
    </alternativeName>
    <alternativeName>
        <fullName evidence="1">Membrane protein YidC</fullName>
    </alternativeName>
</protein>
<evidence type="ECO:0000255" key="1">
    <source>
        <dbReference type="HAMAP-Rule" id="MF_01810"/>
    </source>
</evidence>
<evidence type="ECO:0000256" key="2">
    <source>
        <dbReference type="SAM" id="MobiDB-lite"/>
    </source>
</evidence>
<evidence type="ECO:0000305" key="3"/>
<organism>
    <name type="scientific">Bordetella bronchiseptica (strain ATCC BAA-588 / NCTC 13252 / RB50)</name>
    <name type="common">Alcaligenes bronchisepticus</name>
    <dbReference type="NCBI Taxonomy" id="257310"/>
    <lineage>
        <taxon>Bacteria</taxon>
        <taxon>Pseudomonadati</taxon>
        <taxon>Pseudomonadota</taxon>
        <taxon>Betaproteobacteria</taxon>
        <taxon>Burkholderiales</taxon>
        <taxon>Alcaligenaceae</taxon>
        <taxon>Bordetella</taxon>
    </lineage>
</organism>
<gene>
    <name evidence="1" type="primary">yidC</name>
    <name type="ordered locus">BB4993</name>
</gene>
<reference key="1">
    <citation type="journal article" date="2003" name="Nat. Genet.">
        <title>Comparative analysis of the genome sequences of Bordetella pertussis, Bordetella parapertussis and Bordetella bronchiseptica.</title>
        <authorList>
            <person name="Parkhill J."/>
            <person name="Sebaihia M."/>
            <person name="Preston A."/>
            <person name="Murphy L.D."/>
            <person name="Thomson N.R."/>
            <person name="Harris D.E."/>
            <person name="Holden M.T.G."/>
            <person name="Churcher C.M."/>
            <person name="Bentley S.D."/>
            <person name="Mungall K.L."/>
            <person name="Cerdeno-Tarraga A.-M."/>
            <person name="Temple L."/>
            <person name="James K.D."/>
            <person name="Harris B."/>
            <person name="Quail M.A."/>
            <person name="Achtman M."/>
            <person name="Atkin R."/>
            <person name="Baker S."/>
            <person name="Basham D."/>
            <person name="Bason N."/>
            <person name="Cherevach I."/>
            <person name="Chillingworth T."/>
            <person name="Collins M."/>
            <person name="Cronin A."/>
            <person name="Davis P."/>
            <person name="Doggett J."/>
            <person name="Feltwell T."/>
            <person name="Goble A."/>
            <person name="Hamlin N."/>
            <person name="Hauser H."/>
            <person name="Holroyd S."/>
            <person name="Jagels K."/>
            <person name="Leather S."/>
            <person name="Moule S."/>
            <person name="Norberczak H."/>
            <person name="O'Neil S."/>
            <person name="Ormond D."/>
            <person name="Price C."/>
            <person name="Rabbinowitsch E."/>
            <person name="Rutter S."/>
            <person name="Sanders M."/>
            <person name="Saunders D."/>
            <person name="Seeger K."/>
            <person name="Sharp S."/>
            <person name="Simmonds M."/>
            <person name="Skelton J."/>
            <person name="Squares R."/>
            <person name="Squares S."/>
            <person name="Stevens K."/>
            <person name="Unwin L."/>
            <person name="Whitehead S."/>
            <person name="Barrell B.G."/>
            <person name="Maskell D.J."/>
        </authorList>
    </citation>
    <scope>NUCLEOTIDE SEQUENCE [LARGE SCALE GENOMIC DNA]</scope>
    <source>
        <strain>ATCC BAA-588 / NCTC 13252 / RB50</strain>
    </source>
</reference>
<accession>P65623</accession>
<accession>Q7VSD6</accession>
<accession>Q7WDJ5</accession>
<sequence length="563" mass="61631">MDIRRTVLWMIFSFSLLLLWNNWQIHNGKPSLFGGPAPEAAATQQPKADANGTAASSTASIPSSPAAAPAAASVPGAAAPAAAKSEQVVITTDVLRLTFDSNGAQLIRAELLKYPSSSQSDKPTVLMDRSADLVYVAQTGVVGAPQGESFPTHQTPFHLVSSERSLTGDTLDVVFEAESGGLKVTKTYTLHRGRYDVDVRHAMANTGGAPLNPALYLQLERDGTDPAGTSSFYHTFTGVAVYSEQDKFQKVTFSDIEKKKGTYIKQADNGWIGIVQHYFATAWIPAQGKQRTNELLQVQQNLYAARTIEAVGTIAPGSSANVDAHLWVGPQDQKAMAAVAPGLELVVDYGWLTIIAKPLFTLMTWLHGLLGNWGWTIVALTVIIKAVFFPLAAASYRSMARMKQVAPRLQALKEKYGDDRQKLNQAMMEMYRTEKINPLGGCLPMVVQIPVFIALYWVLLASVEMRGAPWILWVHDLSVRDPFFILPAIMMATMFLQIKLNPTPPDPVQAKVMMIMPLVFGGMMFFFPAGLVLYWCVNNTLSIAQQWTITRNLERQAAAAANR</sequence>
<comment type="function">
    <text evidence="1">Required for the insertion and/or proper folding and/or complex formation of integral membrane proteins into the membrane. Involved in integration of membrane proteins that insert both dependently and independently of the Sec translocase complex, as well as at least some lipoproteins. Aids folding of multispanning membrane proteins.</text>
</comment>
<comment type="subunit">
    <text evidence="1">Interacts with the Sec translocase complex via SecD. Specifically interacts with transmembrane segments of nascent integral membrane proteins during membrane integration.</text>
</comment>
<comment type="subcellular location">
    <subcellularLocation>
        <location evidence="1">Cell membrane</location>
        <topology evidence="1">Multi-pass membrane protein</topology>
    </subcellularLocation>
</comment>
<comment type="similarity">
    <text evidence="1">Belongs to the OXA1/ALB3/YidC family. Type 1 subfamily.</text>
</comment>
<comment type="sequence caution" evidence="3">
    <conflict type="erroneous initiation">
        <sequence resource="EMBL-CDS" id="CAE35357"/>
    </conflict>
    <text>Truncated N-terminus.</text>
</comment>
<name>YIDC_BORBR</name>
<dbReference type="EMBL" id="BX640452">
    <property type="protein sequence ID" value="CAE35357.1"/>
    <property type="status" value="ALT_INIT"/>
    <property type="molecule type" value="Genomic_DNA"/>
</dbReference>
<dbReference type="RefSeq" id="WP_010927254.1">
    <property type="nucleotide sequence ID" value="NC_002927.3"/>
</dbReference>
<dbReference type="SMR" id="P65623"/>
<dbReference type="GeneID" id="69600225"/>
<dbReference type="KEGG" id="bbr:BB4993"/>
<dbReference type="eggNOG" id="COG0706">
    <property type="taxonomic scope" value="Bacteria"/>
</dbReference>
<dbReference type="HOGENOM" id="CLU_016535_3_0_4"/>
<dbReference type="Proteomes" id="UP000001027">
    <property type="component" value="Chromosome"/>
</dbReference>
<dbReference type="GO" id="GO:0005886">
    <property type="term" value="C:plasma membrane"/>
    <property type="evidence" value="ECO:0007669"/>
    <property type="project" value="UniProtKB-SubCell"/>
</dbReference>
<dbReference type="GO" id="GO:0032977">
    <property type="term" value="F:membrane insertase activity"/>
    <property type="evidence" value="ECO:0007669"/>
    <property type="project" value="InterPro"/>
</dbReference>
<dbReference type="GO" id="GO:0051205">
    <property type="term" value="P:protein insertion into membrane"/>
    <property type="evidence" value="ECO:0007669"/>
    <property type="project" value="TreeGrafter"/>
</dbReference>
<dbReference type="GO" id="GO:0015031">
    <property type="term" value="P:protein transport"/>
    <property type="evidence" value="ECO:0007669"/>
    <property type="project" value="UniProtKB-KW"/>
</dbReference>
<dbReference type="CDD" id="cd20070">
    <property type="entry name" value="5TM_YidC_Alb3"/>
    <property type="match status" value="1"/>
</dbReference>
<dbReference type="CDD" id="cd19961">
    <property type="entry name" value="EcYidC-like_peri"/>
    <property type="match status" value="1"/>
</dbReference>
<dbReference type="Gene3D" id="2.70.98.90">
    <property type="match status" value="1"/>
</dbReference>
<dbReference type="HAMAP" id="MF_01810">
    <property type="entry name" value="YidC_type1"/>
    <property type="match status" value="1"/>
</dbReference>
<dbReference type="InterPro" id="IPR019998">
    <property type="entry name" value="Membr_insert_YidC"/>
</dbReference>
<dbReference type="InterPro" id="IPR028053">
    <property type="entry name" value="Membr_insert_YidC_N"/>
</dbReference>
<dbReference type="InterPro" id="IPR001708">
    <property type="entry name" value="YidC/ALB3/OXA1/COX18"/>
</dbReference>
<dbReference type="InterPro" id="IPR028055">
    <property type="entry name" value="YidC/Oxa/ALB_C"/>
</dbReference>
<dbReference type="InterPro" id="IPR047196">
    <property type="entry name" value="YidC_ALB_C"/>
</dbReference>
<dbReference type="InterPro" id="IPR038221">
    <property type="entry name" value="YidC_periplasmic_sf"/>
</dbReference>
<dbReference type="NCBIfam" id="NF002352">
    <property type="entry name" value="PRK01318.1-3"/>
    <property type="match status" value="1"/>
</dbReference>
<dbReference type="NCBIfam" id="TIGR03593">
    <property type="entry name" value="yidC_nterm"/>
    <property type="match status" value="1"/>
</dbReference>
<dbReference type="NCBIfam" id="TIGR03592">
    <property type="entry name" value="yidC_oxa1_cterm"/>
    <property type="match status" value="1"/>
</dbReference>
<dbReference type="PANTHER" id="PTHR12428:SF65">
    <property type="entry name" value="CYTOCHROME C OXIDASE ASSEMBLY PROTEIN COX18, MITOCHONDRIAL"/>
    <property type="match status" value="1"/>
</dbReference>
<dbReference type="PANTHER" id="PTHR12428">
    <property type="entry name" value="OXA1"/>
    <property type="match status" value="1"/>
</dbReference>
<dbReference type="Pfam" id="PF02096">
    <property type="entry name" value="60KD_IMP"/>
    <property type="match status" value="1"/>
</dbReference>
<dbReference type="Pfam" id="PF14849">
    <property type="entry name" value="YidC_periplas"/>
    <property type="match status" value="1"/>
</dbReference>
<dbReference type="PRINTS" id="PR00701">
    <property type="entry name" value="60KDINNERMP"/>
</dbReference>
<dbReference type="PRINTS" id="PR01900">
    <property type="entry name" value="YIDCPROTEIN"/>
</dbReference>
<keyword id="KW-1003">Cell membrane</keyword>
<keyword id="KW-0143">Chaperone</keyword>
<keyword id="KW-0472">Membrane</keyword>
<keyword id="KW-0653">Protein transport</keyword>
<keyword id="KW-0812">Transmembrane</keyword>
<keyword id="KW-1133">Transmembrane helix</keyword>
<keyword id="KW-0813">Transport</keyword>